<sequence>MRTYLDLLQHVLDHGVDRDDRTGTGTRSAFGYQMRFDLEEGFPVLTTKKLHLRSIIHELLWFLKGDTNIAYLKENGVTIWDEWADENGDLGPVYGYQWRSWPAPDGRHIDQIANLLKMLHTNPQSRRLIVSAWNPALVDEMALPPCHCLFQFYVANGRLSCQLYQRSADIFLGVPFNIASYALLTMMIAQVTGLKPGEFIHTLGDAHIYSNHFEQARLQLTRTPKKLPVMHINPDVKDLFAFRFEDFRLDGYEADPTIKAPIAV</sequence>
<proteinExistence type="inferred from homology"/>
<keyword id="KW-0963">Cytoplasm</keyword>
<keyword id="KW-0489">Methyltransferase</keyword>
<keyword id="KW-0545">Nucleotide biosynthesis</keyword>
<keyword id="KW-0808">Transferase</keyword>
<accession>A5VRE7</accession>
<name>TYSY_BRUO2</name>
<feature type="chain" id="PRO_1000000585" description="Thymidylate synthase">
    <location>
        <begin position="1"/>
        <end position="264"/>
    </location>
</feature>
<feature type="active site" description="Nucleophile" evidence="1">
    <location>
        <position position="146"/>
    </location>
</feature>
<feature type="binding site" description="in other chain" evidence="1">
    <location>
        <position position="21"/>
    </location>
    <ligand>
        <name>dUMP</name>
        <dbReference type="ChEBI" id="CHEBI:246422"/>
        <note>ligand shared between dimeric partners</note>
    </ligand>
</feature>
<feature type="binding site" evidence="1">
    <location>
        <position position="51"/>
    </location>
    <ligand>
        <name>(6R)-5,10-methylene-5,6,7,8-tetrahydrofolate</name>
        <dbReference type="ChEBI" id="CHEBI:15636"/>
    </ligand>
</feature>
<feature type="binding site" evidence="1">
    <location>
        <begin position="126"/>
        <end position="127"/>
    </location>
    <ligand>
        <name>dUMP</name>
        <dbReference type="ChEBI" id="CHEBI:246422"/>
        <note>ligand shared between dimeric partners</note>
    </ligand>
</feature>
<feature type="binding site" description="in other chain" evidence="1">
    <location>
        <begin position="166"/>
        <end position="169"/>
    </location>
    <ligand>
        <name>dUMP</name>
        <dbReference type="ChEBI" id="CHEBI:246422"/>
        <note>ligand shared between dimeric partners</note>
    </ligand>
</feature>
<feature type="binding site" evidence="1">
    <location>
        <position position="169"/>
    </location>
    <ligand>
        <name>(6R)-5,10-methylene-5,6,7,8-tetrahydrofolate</name>
        <dbReference type="ChEBI" id="CHEBI:15636"/>
    </ligand>
</feature>
<feature type="binding site" description="in other chain" evidence="1">
    <location>
        <position position="177"/>
    </location>
    <ligand>
        <name>dUMP</name>
        <dbReference type="ChEBI" id="CHEBI:246422"/>
        <note>ligand shared between dimeric partners</note>
    </ligand>
</feature>
<feature type="binding site" description="in other chain" evidence="1">
    <location>
        <begin position="207"/>
        <end position="209"/>
    </location>
    <ligand>
        <name>dUMP</name>
        <dbReference type="ChEBI" id="CHEBI:246422"/>
        <note>ligand shared between dimeric partners</note>
    </ligand>
</feature>
<feature type="binding site" evidence="1">
    <location>
        <position position="263"/>
    </location>
    <ligand>
        <name>(6R)-5,10-methylene-5,6,7,8-tetrahydrofolate</name>
        <dbReference type="ChEBI" id="CHEBI:15636"/>
    </ligand>
</feature>
<gene>
    <name evidence="1" type="primary">thyA</name>
    <name type="ordered locus">BOV_1355</name>
</gene>
<protein>
    <recommendedName>
        <fullName evidence="1">Thymidylate synthase</fullName>
        <shortName evidence="1">TS</shortName>
        <shortName evidence="1">TSase</shortName>
        <ecNumber evidence="1">2.1.1.45</ecNumber>
    </recommendedName>
</protein>
<comment type="function">
    <text evidence="1">Catalyzes the reductive methylation of 2'-deoxyuridine-5'-monophosphate (dUMP) to 2'-deoxythymidine-5'-monophosphate (dTMP) while utilizing 5,10-methylenetetrahydrofolate (mTHF) as the methyl donor and reductant in the reaction, yielding dihydrofolate (DHF) as a by-product. This enzymatic reaction provides an intracellular de novo source of dTMP, an essential precursor for DNA biosynthesis.</text>
</comment>
<comment type="catalytic activity">
    <reaction evidence="1">
        <text>dUMP + (6R)-5,10-methylene-5,6,7,8-tetrahydrofolate = 7,8-dihydrofolate + dTMP</text>
        <dbReference type="Rhea" id="RHEA:12104"/>
        <dbReference type="ChEBI" id="CHEBI:15636"/>
        <dbReference type="ChEBI" id="CHEBI:57451"/>
        <dbReference type="ChEBI" id="CHEBI:63528"/>
        <dbReference type="ChEBI" id="CHEBI:246422"/>
        <dbReference type="EC" id="2.1.1.45"/>
    </reaction>
</comment>
<comment type="pathway">
    <text evidence="1">Pyrimidine metabolism; dTTP biosynthesis.</text>
</comment>
<comment type="subunit">
    <text evidence="1">Homodimer.</text>
</comment>
<comment type="subcellular location">
    <subcellularLocation>
        <location evidence="1">Cytoplasm</location>
    </subcellularLocation>
</comment>
<comment type="similarity">
    <text evidence="1">Belongs to the thymidylate synthase family. Bacterial-type ThyA subfamily.</text>
</comment>
<dbReference type="EC" id="2.1.1.45" evidence="1"/>
<dbReference type="EMBL" id="CP000708">
    <property type="protein sequence ID" value="ABQ61558.1"/>
    <property type="molecule type" value="Genomic_DNA"/>
</dbReference>
<dbReference type="RefSeq" id="WP_006155520.1">
    <property type="nucleotide sequence ID" value="NC_009505.1"/>
</dbReference>
<dbReference type="SMR" id="A5VRE7"/>
<dbReference type="GeneID" id="45124746"/>
<dbReference type="KEGG" id="bov:BOV_1355"/>
<dbReference type="HOGENOM" id="CLU_021669_0_0_5"/>
<dbReference type="PhylomeDB" id="A5VRE7"/>
<dbReference type="UniPathway" id="UPA00575"/>
<dbReference type="Proteomes" id="UP000006383">
    <property type="component" value="Chromosome I"/>
</dbReference>
<dbReference type="GO" id="GO:0005829">
    <property type="term" value="C:cytosol"/>
    <property type="evidence" value="ECO:0007669"/>
    <property type="project" value="TreeGrafter"/>
</dbReference>
<dbReference type="GO" id="GO:0004799">
    <property type="term" value="F:thymidylate synthase activity"/>
    <property type="evidence" value="ECO:0007669"/>
    <property type="project" value="UniProtKB-UniRule"/>
</dbReference>
<dbReference type="GO" id="GO:0006231">
    <property type="term" value="P:dTMP biosynthetic process"/>
    <property type="evidence" value="ECO:0007669"/>
    <property type="project" value="UniProtKB-UniRule"/>
</dbReference>
<dbReference type="GO" id="GO:0006235">
    <property type="term" value="P:dTTP biosynthetic process"/>
    <property type="evidence" value="ECO:0007669"/>
    <property type="project" value="UniProtKB-UniRule"/>
</dbReference>
<dbReference type="GO" id="GO:0032259">
    <property type="term" value="P:methylation"/>
    <property type="evidence" value="ECO:0007669"/>
    <property type="project" value="UniProtKB-KW"/>
</dbReference>
<dbReference type="CDD" id="cd00351">
    <property type="entry name" value="TS_Pyrimidine_HMase"/>
    <property type="match status" value="1"/>
</dbReference>
<dbReference type="FunFam" id="3.30.572.10:FF:000001">
    <property type="entry name" value="Thymidylate synthase"/>
    <property type="match status" value="1"/>
</dbReference>
<dbReference type="Gene3D" id="3.30.572.10">
    <property type="entry name" value="Thymidylate synthase/dCMP hydroxymethylase domain"/>
    <property type="match status" value="1"/>
</dbReference>
<dbReference type="HAMAP" id="MF_00008">
    <property type="entry name" value="Thymidy_synth_bact"/>
    <property type="match status" value="1"/>
</dbReference>
<dbReference type="InterPro" id="IPR045097">
    <property type="entry name" value="Thymidate_synth/dCMP_Mease"/>
</dbReference>
<dbReference type="InterPro" id="IPR023451">
    <property type="entry name" value="Thymidate_synth/dCMP_Mease_dom"/>
</dbReference>
<dbReference type="InterPro" id="IPR036926">
    <property type="entry name" value="Thymidate_synth/dCMP_Mease_sf"/>
</dbReference>
<dbReference type="InterPro" id="IPR000398">
    <property type="entry name" value="Thymidylate_synthase"/>
</dbReference>
<dbReference type="InterPro" id="IPR020940">
    <property type="entry name" value="Thymidylate_synthase_AS"/>
</dbReference>
<dbReference type="NCBIfam" id="NF002497">
    <property type="entry name" value="PRK01827.1-3"/>
    <property type="match status" value="1"/>
</dbReference>
<dbReference type="NCBIfam" id="NF002499">
    <property type="entry name" value="PRK01827.1-5"/>
    <property type="match status" value="1"/>
</dbReference>
<dbReference type="NCBIfam" id="TIGR03284">
    <property type="entry name" value="thym_sym"/>
    <property type="match status" value="2"/>
</dbReference>
<dbReference type="PANTHER" id="PTHR11548:SF9">
    <property type="entry name" value="THYMIDYLATE SYNTHASE"/>
    <property type="match status" value="1"/>
</dbReference>
<dbReference type="PANTHER" id="PTHR11548">
    <property type="entry name" value="THYMIDYLATE SYNTHASE 1"/>
    <property type="match status" value="1"/>
</dbReference>
<dbReference type="Pfam" id="PF00303">
    <property type="entry name" value="Thymidylat_synt"/>
    <property type="match status" value="1"/>
</dbReference>
<dbReference type="PRINTS" id="PR00108">
    <property type="entry name" value="THYMDSNTHASE"/>
</dbReference>
<dbReference type="SUPFAM" id="SSF55831">
    <property type="entry name" value="Thymidylate synthase/dCMP hydroxymethylase"/>
    <property type="match status" value="1"/>
</dbReference>
<dbReference type="PROSITE" id="PS00091">
    <property type="entry name" value="THYMIDYLATE_SYNTHASE"/>
    <property type="match status" value="1"/>
</dbReference>
<reference key="1">
    <citation type="journal article" date="2009" name="PLoS ONE">
        <title>Genome degradation in Brucella ovis corresponds with narrowing of its host range and tissue tropism.</title>
        <authorList>
            <person name="Tsolis R.M."/>
            <person name="Seshadri R."/>
            <person name="Santos R.L."/>
            <person name="Sangari F.J."/>
            <person name="Lobo J.M."/>
            <person name="de Jong M.F."/>
            <person name="Ren Q."/>
            <person name="Myers G."/>
            <person name="Brinkac L.M."/>
            <person name="Nelson W.C."/>
            <person name="Deboy R.T."/>
            <person name="Angiuoli S."/>
            <person name="Khouri H."/>
            <person name="Dimitrov G."/>
            <person name="Robinson J.R."/>
            <person name="Mulligan S."/>
            <person name="Walker R.L."/>
            <person name="Elzer P.E."/>
            <person name="Hassan K.A."/>
            <person name="Paulsen I.T."/>
        </authorList>
    </citation>
    <scope>NUCLEOTIDE SEQUENCE [LARGE SCALE GENOMIC DNA]</scope>
    <source>
        <strain>ATCC 25840 / 63/290 / NCTC 10512</strain>
    </source>
</reference>
<organism>
    <name type="scientific">Brucella ovis (strain ATCC 25840 / 63/290 / NCTC 10512)</name>
    <dbReference type="NCBI Taxonomy" id="444178"/>
    <lineage>
        <taxon>Bacteria</taxon>
        <taxon>Pseudomonadati</taxon>
        <taxon>Pseudomonadota</taxon>
        <taxon>Alphaproteobacteria</taxon>
        <taxon>Hyphomicrobiales</taxon>
        <taxon>Brucellaceae</taxon>
        <taxon>Brucella/Ochrobactrum group</taxon>
        <taxon>Brucella</taxon>
    </lineage>
</organism>
<evidence type="ECO:0000255" key="1">
    <source>
        <dbReference type="HAMAP-Rule" id="MF_00008"/>
    </source>
</evidence>